<name>PSAJ_PINKO</name>
<feature type="chain" id="PRO_0000207810" description="Photosystem I reaction center subunit IX">
    <location>
        <begin position="1"/>
        <end position="50"/>
    </location>
</feature>
<feature type="transmembrane region" description="Helical" evidence="1">
    <location>
        <begin position="7"/>
        <end position="27"/>
    </location>
</feature>
<keyword id="KW-0150">Chloroplast</keyword>
<keyword id="KW-0472">Membrane</keyword>
<keyword id="KW-0602">Photosynthesis</keyword>
<keyword id="KW-0603">Photosystem I</keyword>
<keyword id="KW-0934">Plastid</keyword>
<keyword id="KW-0793">Thylakoid</keyword>
<keyword id="KW-0812">Transmembrane</keyword>
<keyword id="KW-1133">Transmembrane helix</keyword>
<geneLocation type="chloroplast"/>
<comment type="function">
    <text evidence="1">May help in the organization of the PsaE and PsaF subunits.</text>
</comment>
<comment type="subcellular location">
    <subcellularLocation>
        <location evidence="1">Plastid</location>
        <location evidence="1">Chloroplast thylakoid membrane</location>
        <topology evidence="1">Single-pass membrane protein</topology>
    </subcellularLocation>
</comment>
<comment type="similarity">
    <text evidence="1">Belongs to the PsaJ family.</text>
</comment>
<sequence length="50" mass="5577">MQDLKTYLSTAPVLAILCCSFLAGLVIEINRFFPDALTLTFPSFEFFSSP</sequence>
<dbReference type="EMBL" id="AY228468">
    <property type="protein sequence ID" value="AAO74030.1"/>
    <property type="molecule type" value="Genomic_DNA"/>
</dbReference>
<dbReference type="RefSeq" id="NP_817182.1">
    <property type="nucleotide sequence ID" value="NC_004677.2"/>
</dbReference>
<dbReference type="SMR" id="Q85X34"/>
<dbReference type="GeneID" id="806916"/>
<dbReference type="GO" id="GO:0009535">
    <property type="term" value="C:chloroplast thylakoid membrane"/>
    <property type="evidence" value="ECO:0007669"/>
    <property type="project" value="UniProtKB-SubCell"/>
</dbReference>
<dbReference type="GO" id="GO:0009522">
    <property type="term" value="C:photosystem I"/>
    <property type="evidence" value="ECO:0007669"/>
    <property type="project" value="UniProtKB-KW"/>
</dbReference>
<dbReference type="GO" id="GO:0015979">
    <property type="term" value="P:photosynthesis"/>
    <property type="evidence" value="ECO:0007669"/>
    <property type="project" value="UniProtKB-UniRule"/>
</dbReference>
<dbReference type="Gene3D" id="1.20.5.510">
    <property type="entry name" value="Single helix bin"/>
    <property type="match status" value="1"/>
</dbReference>
<dbReference type="HAMAP" id="MF_00522">
    <property type="entry name" value="PSI_PsaJ"/>
    <property type="match status" value="1"/>
</dbReference>
<dbReference type="InterPro" id="IPR002615">
    <property type="entry name" value="PSI_PsaJ"/>
</dbReference>
<dbReference type="InterPro" id="IPR036062">
    <property type="entry name" value="PSI_PsaJ_sf"/>
</dbReference>
<dbReference type="PANTHER" id="PTHR36082">
    <property type="match status" value="1"/>
</dbReference>
<dbReference type="PANTHER" id="PTHR36082:SF2">
    <property type="entry name" value="PHOTOSYSTEM I REACTION CENTER SUBUNIT IX"/>
    <property type="match status" value="1"/>
</dbReference>
<dbReference type="Pfam" id="PF01701">
    <property type="entry name" value="PSI_PsaJ"/>
    <property type="match status" value="1"/>
</dbReference>
<dbReference type="SUPFAM" id="SSF81544">
    <property type="entry name" value="Subunit IX of photosystem I reaction centre, PsaJ"/>
    <property type="match status" value="1"/>
</dbReference>
<gene>
    <name evidence="1" type="primary">psaJ</name>
</gene>
<reference key="1">
    <citation type="submission" date="2003-02" db="EMBL/GenBank/DDBJ databases">
        <title>Complete nucleotide sequence of Pinus koraiensis.</title>
        <authorList>
            <person name="Noh E.W."/>
            <person name="Lee J.S."/>
            <person name="Choi Y.I."/>
            <person name="Han M.S."/>
            <person name="Yi Y.S."/>
            <person name="Han S.U."/>
        </authorList>
    </citation>
    <scope>NUCLEOTIDE SEQUENCE [LARGE SCALE GENOMIC DNA]</scope>
    <source>
        <strain>KangWon16</strain>
    </source>
</reference>
<accession>Q85X34</accession>
<protein>
    <recommendedName>
        <fullName evidence="1">Photosystem I reaction center subunit IX</fullName>
    </recommendedName>
    <alternativeName>
        <fullName evidence="1">PSI-J</fullName>
    </alternativeName>
</protein>
<evidence type="ECO:0000255" key="1">
    <source>
        <dbReference type="HAMAP-Rule" id="MF_00522"/>
    </source>
</evidence>
<organism>
    <name type="scientific">Pinus koraiensis</name>
    <name type="common">Korean pine</name>
    <dbReference type="NCBI Taxonomy" id="88728"/>
    <lineage>
        <taxon>Eukaryota</taxon>
        <taxon>Viridiplantae</taxon>
        <taxon>Streptophyta</taxon>
        <taxon>Embryophyta</taxon>
        <taxon>Tracheophyta</taxon>
        <taxon>Spermatophyta</taxon>
        <taxon>Pinopsida</taxon>
        <taxon>Pinidae</taxon>
        <taxon>Conifers I</taxon>
        <taxon>Pinales</taxon>
        <taxon>Pinaceae</taxon>
        <taxon>Pinus</taxon>
        <taxon>Pinus subgen. Strobus</taxon>
    </lineage>
</organism>
<proteinExistence type="inferred from homology"/>